<organism>
    <name type="scientific">Anaeromyxobacter sp. (strain K)</name>
    <dbReference type="NCBI Taxonomy" id="447217"/>
    <lineage>
        <taxon>Bacteria</taxon>
        <taxon>Pseudomonadati</taxon>
        <taxon>Myxococcota</taxon>
        <taxon>Myxococcia</taxon>
        <taxon>Myxococcales</taxon>
        <taxon>Cystobacterineae</taxon>
        <taxon>Anaeromyxobacteraceae</taxon>
        <taxon>Anaeromyxobacter</taxon>
    </lineage>
</organism>
<name>ATPF_ANASK</name>
<keyword id="KW-0066">ATP synthesis</keyword>
<keyword id="KW-0997">Cell inner membrane</keyword>
<keyword id="KW-1003">Cell membrane</keyword>
<keyword id="KW-0138">CF(0)</keyword>
<keyword id="KW-0375">Hydrogen ion transport</keyword>
<keyword id="KW-0406">Ion transport</keyword>
<keyword id="KW-0472">Membrane</keyword>
<keyword id="KW-0812">Transmembrane</keyword>
<keyword id="KW-1133">Transmembrane helix</keyword>
<keyword id="KW-0813">Transport</keyword>
<gene>
    <name evidence="1" type="primary">atpF</name>
    <name type="ordered locus">AnaeK_4474</name>
</gene>
<protein>
    <recommendedName>
        <fullName evidence="1">ATP synthase subunit b</fullName>
    </recommendedName>
    <alternativeName>
        <fullName evidence="1">ATP synthase F(0) sector subunit b</fullName>
    </alternativeName>
    <alternativeName>
        <fullName evidence="1">ATPase subunit I</fullName>
    </alternativeName>
    <alternativeName>
        <fullName evidence="1">F-type ATPase subunit b</fullName>
        <shortName evidence="1">F-ATPase subunit b</shortName>
    </alternativeName>
</protein>
<feature type="chain" id="PRO_0000368312" description="ATP synthase subunit b">
    <location>
        <begin position="1"/>
        <end position="179"/>
    </location>
</feature>
<feature type="transmembrane region" description="Helical" evidence="1">
    <location>
        <begin position="27"/>
        <end position="47"/>
    </location>
</feature>
<accession>B4UJU5</accession>
<proteinExistence type="inferred from homology"/>
<dbReference type="EMBL" id="CP001131">
    <property type="protein sequence ID" value="ACG75676.1"/>
    <property type="molecule type" value="Genomic_DNA"/>
</dbReference>
<dbReference type="RefSeq" id="WP_012528420.1">
    <property type="nucleotide sequence ID" value="NC_011145.1"/>
</dbReference>
<dbReference type="SMR" id="B4UJU5"/>
<dbReference type="KEGG" id="ank:AnaeK_4474"/>
<dbReference type="HOGENOM" id="CLU_079215_4_1_7"/>
<dbReference type="OrthoDB" id="9795289at2"/>
<dbReference type="Proteomes" id="UP000001871">
    <property type="component" value="Chromosome"/>
</dbReference>
<dbReference type="GO" id="GO:0005886">
    <property type="term" value="C:plasma membrane"/>
    <property type="evidence" value="ECO:0007669"/>
    <property type="project" value="UniProtKB-SubCell"/>
</dbReference>
<dbReference type="GO" id="GO:0045259">
    <property type="term" value="C:proton-transporting ATP synthase complex"/>
    <property type="evidence" value="ECO:0007669"/>
    <property type="project" value="UniProtKB-KW"/>
</dbReference>
<dbReference type="GO" id="GO:0046933">
    <property type="term" value="F:proton-transporting ATP synthase activity, rotational mechanism"/>
    <property type="evidence" value="ECO:0007669"/>
    <property type="project" value="UniProtKB-UniRule"/>
</dbReference>
<dbReference type="GO" id="GO:0046961">
    <property type="term" value="F:proton-transporting ATPase activity, rotational mechanism"/>
    <property type="evidence" value="ECO:0007669"/>
    <property type="project" value="TreeGrafter"/>
</dbReference>
<dbReference type="CDD" id="cd06503">
    <property type="entry name" value="ATP-synt_Fo_b"/>
    <property type="match status" value="1"/>
</dbReference>
<dbReference type="HAMAP" id="MF_01398">
    <property type="entry name" value="ATP_synth_b_bprime"/>
    <property type="match status" value="1"/>
</dbReference>
<dbReference type="InterPro" id="IPR002146">
    <property type="entry name" value="ATP_synth_b/b'su_bac/chlpt"/>
</dbReference>
<dbReference type="InterPro" id="IPR005864">
    <property type="entry name" value="ATP_synth_F0_bsu_bac"/>
</dbReference>
<dbReference type="InterPro" id="IPR050059">
    <property type="entry name" value="ATP_synthase_B_chain"/>
</dbReference>
<dbReference type="NCBIfam" id="TIGR01144">
    <property type="entry name" value="ATP_synt_b"/>
    <property type="match status" value="1"/>
</dbReference>
<dbReference type="PANTHER" id="PTHR33445:SF1">
    <property type="entry name" value="ATP SYNTHASE SUBUNIT B"/>
    <property type="match status" value="1"/>
</dbReference>
<dbReference type="PANTHER" id="PTHR33445">
    <property type="entry name" value="ATP SYNTHASE SUBUNIT B', CHLOROPLASTIC"/>
    <property type="match status" value="1"/>
</dbReference>
<dbReference type="Pfam" id="PF00430">
    <property type="entry name" value="ATP-synt_B"/>
    <property type="match status" value="1"/>
</dbReference>
<reference key="1">
    <citation type="submission" date="2008-08" db="EMBL/GenBank/DDBJ databases">
        <title>Complete sequence of Anaeromyxobacter sp. K.</title>
        <authorList>
            <consortium name="US DOE Joint Genome Institute"/>
            <person name="Lucas S."/>
            <person name="Copeland A."/>
            <person name="Lapidus A."/>
            <person name="Glavina del Rio T."/>
            <person name="Dalin E."/>
            <person name="Tice H."/>
            <person name="Bruce D."/>
            <person name="Goodwin L."/>
            <person name="Pitluck S."/>
            <person name="Saunders E."/>
            <person name="Brettin T."/>
            <person name="Detter J.C."/>
            <person name="Han C."/>
            <person name="Larimer F."/>
            <person name="Land M."/>
            <person name="Hauser L."/>
            <person name="Kyrpides N."/>
            <person name="Ovchinnikiva G."/>
            <person name="Beliaev A."/>
        </authorList>
    </citation>
    <scope>NUCLEOTIDE SEQUENCE [LARGE SCALE GENOMIC DNA]</scope>
    <source>
        <strain>K</strain>
    </source>
</reference>
<sequence length="179" mass="19593">MASFLSPVPVLAAGGIADINPGLTLWTAITFLVMLVVLGKFAWGPIVKMLAERERSIREAIDSAKKERAEAERLLAAQKESLAKAQREAAELARRNQQEVEALRQELTAKARKEADELVAEARRQIAEELGKAKTELKAQVVDLAIDAASRLVKANLDEKAQRALVEEYIAQLPANRAA</sequence>
<comment type="function">
    <text evidence="1">F(1)F(0) ATP synthase produces ATP from ADP in the presence of a proton or sodium gradient. F-type ATPases consist of two structural domains, F(1) containing the extramembraneous catalytic core and F(0) containing the membrane proton channel, linked together by a central stalk and a peripheral stalk. During catalysis, ATP synthesis in the catalytic domain of F(1) is coupled via a rotary mechanism of the central stalk subunits to proton translocation.</text>
</comment>
<comment type="function">
    <text evidence="1">Component of the F(0) channel, it forms part of the peripheral stalk, linking F(1) to F(0).</text>
</comment>
<comment type="subunit">
    <text evidence="1">F-type ATPases have 2 components, F(1) - the catalytic core - and F(0) - the membrane proton channel. F(1) has five subunits: alpha(3), beta(3), gamma(1), delta(1), epsilon(1). F(0) has three main subunits: a(1), b(2) and c(10-14). The alpha and beta chains form an alternating ring which encloses part of the gamma chain. F(1) is attached to F(0) by a central stalk formed by the gamma and epsilon chains, while a peripheral stalk is formed by the delta and b chains.</text>
</comment>
<comment type="subcellular location">
    <subcellularLocation>
        <location evidence="1">Cell inner membrane</location>
        <topology evidence="1">Single-pass membrane protein</topology>
    </subcellularLocation>
</comment>
<comment type="similarity">
    <text evidence="1">Belongs to the ATPase B chain family.</text>
</comment>
<evidence type="ECO:0000255" key="1">
    <source>
        <dbReference type="HAMAP-Rule" id="MF_01398"/>
    </source>
</evidence>